<gene>
    <name evidence="1" type="primary">cobT</name>
    <name type="ordered locus">Avin_33050</name>
</gene>
<keyword id="KW-0169">Cobalamin biosynthesis</keyword>
<keyword id="KW-0328">Glycosyltransferase</keyword>
<keyword id="KW-0808">Transferase</keyword>
<feature type="chain" id="PRO_1000204364" description="Nicotinate-nucleotide--dimethylbenzimidazole phosphoribosyltransferase">
    <location>
        <begin position="1"/>
        <end position="352"/>
    </location>
</feature>
<feature type="active site" description="Proton acceptor" evidence="1">
    <location>
        <position position="318"/>
    </location>
</feature>
<proteinExistence type="inferred from homology"/>
<organism>
    <name type="scientific">Azotobacter vinelandii (strain DJ / ATCC BAA-1303)</name>
    <dbReference type="NCBI Taxonomy" id="322710"/>
    <lineage>
        <taxon>Bacteria</taxon>
        <taxon>Pseudomonadati</taxon>
        <taxon>Pseudomonadota</taxon>
        <taxon>Gammaproteobacteria</taxon>
        <taxon>Pseudomonadales</taxon>
        <taxon>Pseudomonadaceae</taxon>
        <taxon>Azotobacter</taxon>
    </lineage>
</organism>
<accession>C1DPN9</accession>
<protein>
    <recommendedName>
        <fullName evidence="1">Nicotinate-nucleotide--dimethylbenzimidazole phosphoribosyltransferase</fullName>
        <shortName evidence="1">NN:DBI PRT</shortName>
        <ecNumber evidence="1">2.4.2.21</ecNumber>
    </recommendedName>
    <alternativeName>
        <fullName evidence="1">N(1)-alpha-phosphoribosyltransferase</fullName>
    </alternativeName>
</protein>
<evidence type="ECO:0000255" key="1">
    <source>
        <dbReference type="HAMAP-Rule" id="MF_00230"/>
    </source>
</evidence>
<dbReference type="EC" id="2.4.2.21" evidence="1"/>
<dbReference type="EMBL" id="CP001157">
    <property type="protein sequence ID" value="ACO79460.1"/>
    <property type="molecule type" value="Genomic_DNA"/>
</dbReference>
<dbReference type="RefSeq" id="WP_012701844.1">
    <property type="nucleotide sequence ID" value="NC_012560.1"/>
</dbReference>
<dbReference type="SMR" id="C1DPN9"/>
<dbReference type="STRING" id="322710.Avin_33050"/>
<dbReference type="EnsemblBacteria" id="ACO79460">
    <property type="protein sequence ID" value="ACO79460"/>
    <property type="gene ID" value="Avin_33050"/>
</dbReference>
<dbReference type="GeneID" id="88186345"/>
<dbReference type="KEGG" id="avn:Avin_33050"/>
<dbReference type="eggNOG" id="COG2038">
    <property type="taxonomic scope" value="Bacteria"/>
</dbReference>
<dbReference type="HOGENOM" id="CLU_002982_0_1_6"/>
<dbReference type="OrthoDB" id="9781491at2"/>
<dbReference type="UniPathway" id="UPA00061">
    <property type="reaction ID" value="UER00516"/>
</dbReference>
<dbReference type="Proteomes" id="UP000002424">
    <property type="component" value="Chromosome"/>
</dbReference>
<dbReference type="GO" id="GO:0008939">
    <property type="term" value="F:nicotinate-nucleotide-dimethylbenzimidazole phosphoribosyltransferase activity"/>
    <property type="evidence" value="ECO:0007669"/>
    <property type="project" value="UniProtKB-UniRule"/>
</dbReference>
<dbReference type="GO" id="GO:0009236">
    <property type="term" value="P:cobalamin biosynthetic process"/>
    <property type="evidence" value="ECO:0007669"/>
    <property type="project" value="UniProtKB-KW"/>
</dbReference>
<dbReference type="CDD" id="cd02439">
    <property type="entry name" value="DMB-PRT_CobT"/>
    <property type="match status" value="1"/>
</dbReference>
<dbReference type="FunFam" id="3.40.50.10210:FF:000001">
    <property type="entry name" value="Nicotinate-nucleotide--dimethylbenzimidazole phosphoribosyltransferase"/>
    <property type="match status" value="1"/>
</dbReference>
<dbReference type="Gene3D" id="1.10.1610.10">
    <property type="match status" value="1"/>
</dbReference>
<dbReference type="Gene3D" id="3.40.50.10210">
    <property type="match status" value="1"/>
</dbReference>
<dbReference type="HAMAP" id="MF_00230">
    <property type="entry name" value="CobT"/>
    <property type="match status" value="1"/>
</dbReference>
<dbReference type="InterPro" id="IPR003200">
    <property type="entry name" value="Nict_dMeBzImd_PRibTrfase"/>
</dbReference>
<dbReference type="InterPro" id="IPR017846">
    <property type="entry name" value="Nict_dMeBzImd_PRibTrfase_bact"/>
</dbReference>
<dbReference type="InterPro" id="IPR023195">
    <property type="entry name" value="Nict_dMeBzImd_PRibTrfase_N"/>
</dbReference>
<dbReference type="InterPro" id="IPR036087">
    <property type="entry name" value="Nict_dMeBzImd_PRibTrfase_sf"/>
</dbReference>
<dbReference type="NCBIfam" id="TIGR03160">
    <property type="entry name" value="cobT_DBIPRT"/>
    <property type="match status" value="1"/>
</dbReference>
<dbReference type="NCBIfam" id="NF000996">
    <property type="entry name" value="PRK00105.1"/>
    <property type="match status" value="1"/>
</dbReference>
<dbReference type="PANTHER" id="PTHR43463">
    <property type="entry name" value="NICOTINATE-NUCLEOTIDE--DIMETHYLBENZIMIDAZOLE PHOSPHORIBOSYLTRANSFERASE"/>
    <property type="match status" value="1"/>
</dbReference>
<dbReference type="PANTHER" id="PTHR43463:SF1">
    <property type="entry name" value="NICOTINATE-NUCLEOTIDE--DIMETHYLBENZIMIDAZOLE PHOSPHORIBOSYLTRANSFERASE"/>
    <property type="match status" value="1"/>
</dbReference>
<dbReference type="Pfam" id="PF02277">
    <property type="entry name" value="DBI_PRT"/>
    <property type="match status" value="1"/>
</dbReference>
<dbReference type="SUPFAM" id="SSF52733">
    <property type="entry name" value="Nicotinate mononucleotide:5,6-dimethylbenzimidazole phosphoribosyltransferase (CobT)"/>
    <property type="match status" value="1"/>
</dbReference>
<name>COBT_AZOVD</name>
<reference key="1">
    <citation type="journal article" date="2009" name="J. Bacteriol.">
        <title>Genome sequence of Azotobacter vinelandii, an obligate aerobe specialized to support diverse anaerobic metabolic processes.</title>
        <authorList>
            <person name="Setubal J.C."/>
            <person name="Dos Santos P."/>
            <person name="Goldman B.S."/>
            <person name="Ertesvaag H."/>
            <person name="Espin G."/>
            <person name="Rubio L.M."/>
            <person name="Valla S."/>
            <person name="Almeida N.F."/>
            <person name="Balasubramanian D."/>
            <person name="Cromes L."/>
            <person name="Curatti L."/>
            <person name="Du Z."/>
            <person name="Godsy E."/>
            <person name="Goodner B."/>
            <person name="Hellner-Burris K."/>
            <person name="Hernandez J.A."/>
            <person name="Houmiel K."/>
            <person name="Imperial J."/>
            <person name="Kennedy C."/>
            <person name="Larson T.J."/>
            <person name="Latreille P."/>
            <person name="Ligon L.S."/>
            <person name="Lu J."/>
            <person name="Maerk M."/>
            <person name="Miller N.M."/>
            <person name="Norton S."/>
            <person name="O'Carroll I.P."/>
            <person name="Paulsen I."/>
            <person name="Raulfs E.C."/>
            <person name="Roemer R."/>
            <person name="Rosser J."/>
            <person name="Segura D."/>
            <person name="Slater S."/>
            <person name="Stricklin S.L."/>
            <person name="Studholme D.J."/>
            <person name="Sun J."/>
            <person name="Viana C.J."/>
            <person name="Wallin E."/>
            <person name="Wang B."/>
            <person name="Wheeler C."/>
            <person name="Zhu H."/>
            <person name="Dean D.R."/>
            <person name="Dixon R."/>
            <person name="Wood D."/>
        </authorList>
    </citation>
    <scope>NUCLEOTIDE SEQUENCE [LARGE SCALE GENOMIC DNA]</scope>
    <source>
        <strain>DJ / ATCC BAA-1303</strain>
    </source>
</reference>
<comment type="function">
    <text evidence="1">Catalyzes the synthesis of alpha-ribazole-5'-phosphate from nicotinate mononucleotide (NAMN) and 5,6-dimethylbenzimidazole (DMB).</text>
</comment>
<comment type="catalytic activity">
    <reaction evidence="1">
        <text>5,6-dimethylbenzimidazole + nicotinate beta-D-ribonucleotide = alpha-ribazole 5'-phosphate + nicotinate + H(+)</text>
        <dbReference type="Rhea" id="RHEA:11196"/>
        <dbReference type="ChEBI" id="CHEBI:15378"/>
        <dbReference type="ChEBI" id="CHEBI:15890"/>
        <dbReference type="ChEBI" id="CHEBI:32544"/>
        <dbReference type="ChEBI" id="CHEBI:57502"/>
        <dbReference type="ChEBI" id="CHEBI:57918"/>
        <dbReference type="EC" id="2.4.2.21"/>
    </reaction>
</comment>
<comment type="pathway">
    <text evidence="1">Nucleoside biosynthesis; alpha-ribazole biosynthesis; alpha-ribazole from 5,6-dimethylbenzimidazole: step 1/2.</text>
</comment>
<comment type="similarity">
    <text evidence="1">Belongs to the CobT family.</text>
</comment>
<sequence length="352" mass="36522">MKHDWWLSAARPLDQTACALAAERQRRLTKPRGSLGRLERLAIHLAALQGRERPVVERPWIAIFAGDHGVAEEGVSPYPQAVTGQMLRNFATGGAAISVLARQLGAELELIDLGTAEPLEPPPAGVRRRHLGPGTANFLRGPAMSVRQGLDALAAGRDSVRRAQAAGAHLYIGGEMGIANTSSASALASALLEQPAAALVGPGTGLDAAGLARKVAVVERALALHGAHAGEPLEILRRLGGFEIAALAGAYLACAQEGLPALVDGFICSVAALLAVRLNPACRDWLLFAHRGAEPGHRRVLEALAAEPLLDLGLRLGEGSGAALAVPLLQSACRLHGEMATFAEAAVADAGR</sequence>